<name>SULT_ICTPU</name>
<keyword id="KW-0963">Cytoplasm</keyword>
<keyword id="KW-0903">Direct protein sequencing</keyword>
<keyword id="KW-0443">Lipid metabolism</keyword>
<keyword id="KW-0753">Steroid metabolism</keyword>
<keyword id="KW-0808">Transferase</keyword>
<sequence length="18" mass="2141">SFFEQNXKIVYVARNAKD</sequence>
<proteinExistence type="evidence at protein level"/>
<reference key="1">
    <citation type="journal article" date="2000" name="Arch. Biochem. Biophys.">
        <title>Purification and characterization of hepatic and intestinal phenol sulfotransferase with high affinity for benzo[a]pyrene phenols from channel catfish, Ictalurus punctatus.</title>
        <authorList>
            <person name="Tong Z."/>
            <person name="James M.O."/>
        </authorList>
    </citation>
    <scope>PROTEIN SEQUENCE</scope>
    <source>
        <tissue>Intestinal mucosa</tissue>
        <tissue>Liver</tissue>
    </source>
</reference>
<organism>
    <name type="scientific">Ictalurus punctatus</name>
    <name type="common">Channel catfish</name>
    <name type="synonym">Silurus punctatus</name>
    <dbReference type="NCBI Taxonomy" id="7998"/>
    <lineage>
        <taxon>Eukaryota</taxon>
        <taxon>Metazoa</taxon>
        <taxon>Chordata</taxon>
        <taxon>Craniata</taxon>
        <taxon>Vertebrata</taxon>
        <taxon>Euteleostomi</taxon>
        <taxon>Actinopterygii</taxon>
        <taxon>Neopterygii</taxon>
        <taxon>Teleostei</taxon>
        <taxon>Ostariophysi</taxon>
        <taxon>Siluriformes</taxon>
        <taxon>Ictaluridae</taxon>
        <taxon>Ictalurus</taxon>
    </lineage>
</organism>
<dbReference type="EC" id="2.8.2.1"/>
<dbReference type="Proteomes" id="UP000221080">
    <property type="component" value="Unplaced"/>
</dbReference>
<dbReference type="GO" id="GO:0005737">
    <property type="term" value="C:cytoplasm"/>
    <property type="evidence" value="ECO:0007669"/>
    <property type="project" value="UniProtKB-SubCell"/>
</dbReference>
<dbReference type="GO" id="GO:0004062">
    <property type="term" value="F:aryl sulfotransferase activity"/>
    <property type="evidence" value="ECO:0007669"/>
    <property type="project" value="UniProtKB-EC"/>
</dbReference>
<dbReference type="GO" id="GO:0008202">
    <property type="term" value="P:steroid metabolic process"/>
    <property type="evidence" value="ECO:0007669"/>
    <property type="project" value="UniProtKB-KW"/>
</dbReference>
<protein>
    <recommendedName>
        <fullName>Phenol sulfotransferase</fullName>
        <ecNumber>2.8.2.1</ecNumber>
    </recommendedName>
</protein>
<comment type="function">
    <text>Sulfotransferase that utilizes 3'-phospho-5'-adenylyl sulfate (PAPS) as sulfonate donor to catalyze the sulfate conjugation of phenolic compounds.</text>
</comment>
<comment type="catalytic activity">
    <reaction>
        <text>a phenol + 3'-phosphoadenylyl sulfate = an aryl sulfate + adenosine 3',5'-bisphosphate + H(+)</text>
        <dbReference type="Rhea" id="RHEA:12164"/>
        <dbReference type="ChEBI" id="CHEBI:15378"/>
        <dbReference type="ChEBI" id="CHEBI:33853"/>
        <dbReference type="ChEBI" id="CHEBI:58339"/>
        <dbReference type="ChEBI" id="CHEBI:58343"/>
        <dbReference type="ChEBI" id="CHEBI:140317"/>
        <dbReference type="EC" id="2.8.2.1"/>
    </reaction>
</comment>
<comment type="subcellular location">
    <subcellularLocation>
        <location>Cytoplasm</location>
    </subcellularLocation>
</comment>
<comment type="similarity">
    <text evidence="1">Belongs to the sulfotransferase 1 family.</text>
</comment>
<accession>P82609</accession>
<feature type="chain" id="PRO_0000085176" description="Phenol sulfotransferase">
    <location>
        <begin position="1" status="less than"/>
        <end position="18" status="greater than"/>
    </location>
</feature>
<feature type="non-terminal residue">
    <location>
        <position position="1"/>
    </location>
</feature>
<feature type="non-terminal residue">
    <location>
        <position position="18"/>
    </location>
</feature>
<evidence type="ECO:0000305" key="1"/>